<accession>A1VZV2</accession>
<name>RL34_CAMJJ</name>
<proteinExistence type="inferred from homology"/>
<organism>
    <name type="scientific">Campylobacter jejuni subsp. jejuni serotype O:23/36 (strain 81-176)</name>
    <dbReference type="NCBI Taxonomy" id="354242"/>
    <lineage>
        <taxon>Bacteria</taxon>
        <taxon>Pseudomonadati</taxon>
        <taxon>Campylobacterota</taxon>
        <taxon>Epsilonproteobacteria</taxon>
        <taxon>Campylobacterales</taxon>
        <taxon>Campylobacteraceae</taxon>
        <taxon>Campylobacter</taxon>
    </lineage>
</organism>
<reference key="1">
    <citation type="submission" date="2006-12" db="EMBL/GenBank/DDBJ databases">
        <authorList>
            <person name="Fouts D.E."/>
            <person name="Nelson K.E."/>
            <person name="Sebastian Y."/>
        </authorList>
    </citation>
    <scope>NUCLEOTIDE SEQUENCE [LARGE SCALE GENOMIC DNA]</scope>
    <source>
        <strain>81-176</strain>
    </source>
</reference>
<keyword id="KW-0687">Ribonucleoprotein</keyword>
<keyword id="KW-0689">Ribosomal protein</keyword>
<evidence type="ECO:0000255" key="1">
    <source>
        <dbReference type="HAMAP-Rule" id="MF_00391"/>
    </source>
</evidence>
<evidence type="ECO:0000305" key="2"/>
<sequence>MKRTYQPHGTPRKRTHGFRVRMKTKNGRKVINARRAKGRKRLAV</sequence>
<comment type="similarity">
    <text evidence="1">Belongs to the bacterial ribosomal protein bL34 family.</text>
</comment>
<protein>
    <recommendedName>
        <fullName evidence="1">Large ribosomal subunit protein bL34</fullName>
    </recommendedName>
    <alternativeName>
        <fullName evidence="2">50S ribosomal protein L34</fullName>
    </alternativeName>
</protein>
<gene>
    <name evidence="1" type="primary">rpmH</name>
    <name type="ordered locus">CJJ81176_0984</name>
</gene>
<dbReference type="EMBL" id="CP000538">
    <property type="protein sequence ID" value="EAQ71838.1"/>
    <property type="molecule type" value="Genomic_DNA"/>
</dbReference>
<dbReference type="RefSeq" id="WP_002776864.1">
    <property type="nucleotide sequence ID" value="NC_008787.1"/>
</dbReference>
<dbReference type="SMR" id="A1VZV2"/>
<dbReference type="GeneID" id="66544167"/>
<dbReference type="KEGG" id="cjj:CJJ81176_0984"/>
<dbReference type="eggNOG" id="COG0230">
    <property type="taxonomic scope" value="Bacteria"/>
</dbReference>
<dbReference type="HOGENOM" id="CLU_129938_2_0_7"/>
<dbReference type="Proteomes" id="UP000000646">
    <property type="component" value="Chromosome"/>
</dbReference>
<dbReference type="GO" id="GO:1990904">
    <property type="term" value="C:ribonucleoprotein complex"/>
    <property type="evidence" value="ECO:0007669"/>
    <property type="project" value="UniProtKB-KW"/>
</dbReference>
<dbReference type="GO" id="GO:0005840">
    <property type="term" value="C:ribosome"/>
    <property type="evidence" value="ECO:0007669"/>
    <property type="project" value="UniProtKB-KW"/>
</dbReference>
<dbReference type="GO" id="GO:0003735">
    <property type="term" value="F:structural constituent of ribosome"/>
    <property type="evidence" value="ECO:0007669"/>
    <property type="project" value="InterPro"/>
</dbReference>
<dbReference type="GO" id="GO:0006412">
    <property type="term" value="P:translation"/>
    <property type="evidence" value="ECO:0007669"/>
    <property type="project" value="UniProtKB-UniRule"/>
</dbReference>
<dbReference type="FunFam" id="1.10.287.3980:FF:000001">
    <property type="entry name" value="Mitochondrial ribosomal protein L34"/>
    <property type="match status" value="1"/>
</dbReference>
<dbReference type="Gene3D" id="1.10.287.3980">
    <property type="match status" value="1"/>
</dbReference>
<dbReference type="HAMAP" id="MF_00391">
    <property type="entry name" value="Ribosomal_bL34"/>
    <property type="match status" value="1"/>
</dbReference>
<dbReference type="InterPro" id="IPR000271">
    <property type="entry name" value="Ribosomal_bL34"/>
</dbReference>
<dbReference type="InterPro" id="IPR020939">
    <property type="entry name" value="Ribosomal_bL34_CS"/>
</dbReference>
<dbReference type="NCBIfam" id="TIGR01030">
    <property type="entry name" value="rpmH_bact"/>
    <property type="match status" value="1"/>
</dbReference>
<dbReference type="PANTHER" id="PTHR14503:SF4">
    <property type="entry name" value="LARGE RIBOSOMAL SUBUNIT PROTEIN BL34M"/>
    <property type="match status" value="1"/>
</dbReference>
<dbReference type="PANTHER" id="PTHR14503">
    <property type="entry name" value="MITOCHONDRIAL RIBOSOMAL PROTEIN 34 FAMILY MEMBER"/>
    <property type="match status" value="1"/>
</dbReference>
<dbReference type="Pfam" id="PF00468">
    <property type="entry name" value="Ribosomal_L34"/>
    <property type="match status" value="1"/>
</dbReference>
<dbReference type="PROSITE" id="PS00784">
    <property type="entry name" value="RIBOSOMAL_L34"/>
    <property type="match status" value="1"/>
</dbReference>
<feature type="chain" id="PRO_1000013310" description="Large ribosomal subunit protein bL34">
    <location>
        <begin position="1"/>
        <end position="44"/>
    </location>
</feature>